<feature type="signal peptide" evidence="1">
    <location>
        <begin position="1"/>
        <end position="20"/>
    </location>
</feature>
<feature type="chain" id="PRO_0000312332" description="Integrin beta-like protein B">
    <location>
        <begin position="21"/>
        <end position="1941"/>
    </location>
</feature>
<feature type="topological domain" description="Extracellular" evidence="1">
    <location>
        <begin position="21"/>
        <end position="1871"/>
    </location>
</feature>
<feature type="transmembrane region" description="Helical" evidence="1">
    <location>
        <begin position="1872"/>
        <end position="1892"/>
    </location>
</feature>
<feature type="topological domain" description="Cytoplasmic" evidence="1">
    <location>
        <begin position="1893"/>
        <end position="1941"/>
    </location>
</feature>
<feature type="domain" description="EGF-like" evidence="2">
    <location>
        <begin position="420"/>
        <end position="457"/>
    </location>
</feature>
<feature type="domain" description="VWFA" evidence="3">
    <location>
        <begin position="513"/>
        <end position="696"/>
    </location>
</feature>
<feature type="region of interest" description="Disordered" evidence="4">
    <location>
        <begin position="1921"/>
        <end position="1941"/>
    </location>
</feature>
<feature type="glycosylation site" description="N-linked (GlcNAc...) asparagine" evidence="1">
    <location>
        <position position="1400"/>
    </location>
</feature>
<feature type="glycosylation site" description="N-linked (GlcNAc...) asparagine" evidence="1">
    <location>
        <position position="1505"/>
    </location>
</feature>
<feature type="glycosylation site" description="N-linked (GlcNAc...) asparagine" evidence="1">
    <location>
        <position position="1530"/>
    </location>
</feature>
<feature type="glycosylation site" description="N-linked (GlcNAc...) asparagine" evidence="1">
    <location>
        <position position="1606"/>
    </location>
</feature>
<feature type="glycosylation site" description="N-linked (GlcNAc...) asparagine" evidence="1">
    <location>
        <position position="1652"/>
    </location>
</feature>
<feature type="glycosylation site" description="N-linked (GlcNAc...) asparagine" evidence="1">
    <location>
        <position position="1738"/>
    </location>
</feature>
<feature type="glycosylation site" description="N-linked (GlcNAc...) asparagine" evidence="1">
    <location>
        <position position="1777"/>
    </location>
</feature>
<feature type="glycosylation site" description="N-linked (GlcNAc...) asparagine" evidence="1">
    <location>
        <position position="1848"/>
    </location>
</feature>
<feature type="glycosylation site" description="N-linked (GlcNAc...) asparagine" evidence="1">
    <location>
        <position position="1866"/>
    </location>
</feature>
<feature type="glycosylation site" description="N-linked (GlcNAc...) asparagine" evidence="1">
    <location>
        <position position="1869"/>
    </location>
</feature>
<feature type="disulfide bond" evidence="2">
    <location>
        <begin position="430"/>
        <end position="445"/>
    </location>
</feature>
<feature type="disulfide bond" evidence="2">
    <location>
        <begin position="447"/>
        <end position="456"/>
    </location>
</feature>
<reference key="1">
    <citation type="journal article" date="2005" name="Nature">
        <title>The genome of the social amoeba Dictyostelium discoideum.</title>
        <authorList>
            <person name="Eichinger L."/>
            <person name="Pachebat J.A."/>
            <person name="Gloeckner G."/>
            <person name="Rajandream M.A."/>
            <person name="Sucgang R."/>
            <person name="Berriman M."/>
            <person name="Song J."/>
            <person name="Olsen R."/>
            <person name="Szafranski K."/>
            <person name="Xu Q."/>
            <person name="Tunggal B."/>
            <person name="Kummerfeld S."/>
            <person name="Madera M."/>
            <person name="Konfortov B.A."/>
            <person name="Rivero F."/>
            <person name="Bankier A.T."/>
            <person name="Lehmann R."/>
            <person name="Hamlin N."/>
            <person name="Davies R."/>
            <person name="Gaudet P."/>
            <person name="Fey P."/>
            <person name="Pilcher K."/>
            <person name="Chen G."/>
            <person name="Saunders D."/>
            <person name="Sodergren E.J."/>
            <person name="Davis P."/>
            <person name="Kerhornou A."/>
            <person name="Nie X."/>
            <person name="Hall N."/>
            <person name="Anjard C."/>
            <person name="Hemphill L."/>
            <person name="Bason N."/>
            <person name="Farbrother P."/>
            <person name="Desany B."/>
            <person name="Just E."/>
            <person name="Morio T."/>
            <person name="Rost R."/>
            <person name="Churcher C.M."/>
            <person name="Cooper J."/>
            <person name="Haydock S."/>
            <person name="van Driessche N."/>
            <person name="Cronin A."/>
            <person name="Goodhead I."/>
            <person name="Muzny D.M."/>
            <person name="Mourier T."/>
            <person name="Pain A."/>
            <person name="Lu M."/>
            <person name="Harper D."/>
            <person name="Lindsay R."/>
            <person name="Hauser H."/>
            <person name="James K.D."/>
            <person name="Quiles M."/>
            <person name="Madan Babu M."/>
            <person name="Saito T."/>
            <person name="Buchrieser C."/>
            <person name="Wardroper A."/>
            <person name="Felder M."/>
            <person name="Thangavelu M."/>
            <person name="Johnson D."/>
            <person name="Knights A."/>
            <person name="Loulseged H."/>
            <person name="Mungall K.L."/>
            <person name="Oliver K."/>
            <person name="Price C."/>
            <person name="Quail M.A."/>
            <person name="Urushihara H."/>
            <person name="Hernandez J."/>
            <person name="Rabbinowitsch E."/>
            <person name="Steffen D."/>
            <person name="Sanders M."/>
            <person name="Ma J."/>
            <person name="Kohara Y."/>
            <person name="Sharp S."/>
            <person name="Simmonds M.N."/>
            <person name="Spiegler S."/>
            <person name="Tivey A."/>
            <person name="Sugano S."/>
            <person name="White B."/>
            <person name="Walker D."/>
            <person name="Woodward J.R."/>
            <person name="Winckler T."/>
            <person name="Tanaka Y."/>
            <person name="Shaulsky G."/>
            <person name="Schleicher M."/>
            <person name="Weinstock G.M."/>
            <person name="Rosenthal A."/>
            <person name="Cox E.C."/>
            <person name="Chisholm R.L."/>
            <person name="Gibbs R.A."/>
            <person name="Loomis W.F."/>
            <person name="Platzer M."/>
            <person name="Kay R.R."/>
            <person name="Williams J.G."/>
            <person name="Dear P.H."/>
            <person name="Noegel A.A."/>
            <person name="Barrell B.G."/>
            <person name="Kuspa A."/>
        </authorList>
    </citation>
    <scope>NUCLEOTIDE SEQUENCE [LARGE SCALE GENOMIC DNA]</scope>
    <source>
        <strain>AX4</strain>
    </source>
</reference>
<reference key="2">
    <citation type="journal article" date="2006" name="EMBO Rep.">
        <title>An adhesion molecule in free-living Dictyostelium amoebae with integrin beta features.</title>
        <authorList>
            <person name="Cornillon S."/>
            <person name="Gebbie L."/>
            <person name="Benghezal M."/>
            <person name="Nair P."/>
            <person name="Keller S."/>
            <person name="Wehrle-Haller B."/>
            <person name="Charette S.J."/>
            <person name="Brueckert F."/>
            <person name="Letourneur F."/>
            <person name="Cosson P."/>
        </authorList>
    </citation>
    <scope>IDENTIFICATION</scope>
    <scope>INTERACTION WITH TALA</scope>
</reference>
<evidence type="ECO:0000255" key="1"/>
<evidence type="ECO:0000255" key="2">
    <source>
        <dbReference type="PROSITE-ProRule" id="PRU00076"/>
    </source>
</evidence>
<evidence type="ECO:0000255" key="3">
    <source>
        <dbReference type="PROSITE-ProRule" id="PRU00219"/>
    </source>
</evidence>
<evidence type="ECO:0000256" key="4">
    <source>
        <dbReference type="SAM" id="MobiDB-lite"/>
    </source>
</evidence>
<evidence type="ECO:0000269" key="5">
    <source>
    </source>
</evidence>
<evidence type="ECO:0000305" key="6"/>
<name>SIBB_DICDI</name>
<keyword id="KW-0130">Cell adhesion</keyword>
<keyword id="KW-1015">Disulfide bond</keyword>
<keyword id="KW-0245">EGF-like domain</keyword>
<keyword id="KW-0325">Glycoprotein</keyword>
<keyword id="KW-0472">Membrane</keyword>
<keyword id="KW-1185">Reference proteome</keyword>
<keyword id="KW-0732">Signal</keyword>
<keyword id="KW-0812">Transmembrane</keyword>
<keyword id="KW-1133">Transmembrane helix</keyword>
<sequence>MKNIIKYLFIFLCFLIITEATHFRYGTISWAPTTKYNNIKITVNLAFRTGYWGSVAIGQQISHGNIDFGDNTKTGLTMTVTSKDTDNEWFTATWSGIHEYSPQPTAQTKNYIVVYKDCCRISTLLNNGDQYWHISAGIQIDSSNAFPNVNWSPVTNMMPIVRVIANKNNNFRIIANDQNKQTALSYKFTDTWTMDQPPGMTVDSINGNCWFLPTKEGLYSTQIKVTDALGAYVVVDFLLQTYTEVGKCDPTCSNADASCTSNSQCTKCSNTGSNSINTCTNIQSPPEFIIPTPKNGETILFPIDKSSEFYLSCKTPYASRTASITTSSIPTELALTTTSTGQTNSIKYSWSPKTSSIGSYVISALCKDSSGLTSEVRSFTIRIEKPECGNGGIKGGDGKCVCIGNWDTIYQCFECKDGFYGDKCTVLPPCKNGVPNGGVNGDGKCLCNNGWTGSDCSVSNSQSCGSMTSSILSSSNAVSSYLNPIKAQVYLANDKKFDFPLVLSIPSTLSKLDVYLLVDANMNSAATFLNIYNGMDNFISSVKKFAEDTQFGLGIFSDYPSNSITFQPNSNIGSDISSAIREFKPSSYSSSSNGNSLLAATQASSAQVGWNSGSFKVIVIITDIDYQANPTEKSSFTNSLIDKSVVPVVIGFGSPIPNWGASISSNGFGYTVQSAITSGDWSTKAAAGIKAVSSKLVYKSGEMANGKSLVTSLPIGETITQSTQKTVTISLLKPATTNIESPVAKVSVMGYGQTVISINSNRQPTVSNSGFSVDQNSFATFKLTGSDADLNILTFKFTSFLDSTAGIITSSSGVDVSTQTNTFYSSTEVFKFTPKKNYIATSSISFIANDGCVDSTAATITITINRINQAPECQPITINALLNQQVGISLSASDFEDVASKIAIFVSNPSPLTVYGSFNYQDKPITTTTTINNPWQLTFKQIVNPPSAISVGVPFKSRDSASLYSKECLITVNFVHTNEAPISSSLSPVPVNPRDKTTITLTSTDYDSTSATFNIKSFTTGTDGKGTFYICPQLGDCSCTTTQIKLQKNYVSSAVSYSTNIANLGICFSNDQSSQITDYASVTFTSTDNQGLESLPVTVNINVVGTRPNSPPTIISIPKYSVFQDYKDYDKSSKIIDGTDTDQDDYDKSQGVNNLIAVITEKPKKGTLYLKNDGSVASNSPAPMEIYYVPNPGTFGDDTYSYKVIDTLQASSTIATTTVSVIQINHKPSVSADSYSFTSQDVQFEKSLVTSDFDGDQVNCQVIALPNQISMYDSEGILITQVPAKLSKNSYSFRLLDPSLIIPSPFSNVQSQFTVNCLDVTSKTDPFGPLQSDDLIVNVGYIYINTPPKTKTLTVQLDQDTSKAFTFNGDDIETPTSDLKVKIFSLPTNGRLSNQYGYLNGTSISSRTYYLNELTYTPNAGLSNWDTEDNNSPLDKISYAVLDKGGLSSETDLVYFSVRPRNPPIYTGKDEINVLQNTRYPLTIIGEIGNGGSSVAISVVSFTGNGTLYETFNMGSEGTIDRQISSYPVNRSDSLVGSYFYAYKPPHNQYGDDFDTITFVLIDGDLVSKIYTVTVNVIHVNQPPTIKLISYKVLGGSGKEIEFGSNSTVNMNINTMALVKYIGNDIDKDQVGPLGSKVLNIPLTGTIYKFNNETTPLGAIIKDKNLNIERNDDGFYYFVFVPIKGSTGQGYARVPLIVIDDGGLVSPSESVDFNVNNINIPPVITIDKEKRSYSLLTNLTISATKITFDDPDSKNNDVSITISIVGEKDETVVPFSNVSFTVTTGKATCKPDSTLSSITCVGKKSELNKVISKIDIIAKVAGNYRLKVFVDDLGYNSPISIRSSTHLNATDYVTLQISSPEVTTQNSSNKTVLSGAIAGAAAGTALIAAAMWKMLRKAAPPTDAFFDEGAFLGDGVNSNPMYQESKNGGENPLYLASNETL</sequence>
<comment type="function">
    <text evidence="6">Implicated in cellular adhesion.</text>
</comment>
<comment type="subunit">
    <text evidence="5">Interacts with talA/talin.</text>
</comment>
<comment type="subcellular location">
    <subcellularLocation>
        <location evidence="6">Membrane</location>
        <topology evidence="6">Single-pass type I membrane protein</topology>
    </subcellularLocation>
</comment>
<comment type="similarity">
    <text evidence="6">Belongs to the SIB family.</text>
</comment>
<accession>Q54JE1</accession>
<gene>
    <name type="primary">sibB</name>
    <name type="ORF">DDB_G0288103</name>
</gene>
<protein>
    <recommendedName>
        <fullName>Integrin beta-like protein B</fullName>
    </recommendedName>
</protein>
<proteinExistence type="evidence at protein level"/>
<dbReference type="EMBL" id="AAFI02000109">
    <property type="protein sequence ID" value="EAL63396.1"/>
    <property type="molecule type" value="Genomic_DNA"/>
</dbReference>
<dbReference type="RefSeq" id="XP_636909.1">
    <property type="nucleotide sequence ID" value="XM_631817.1"/>
</dbReference>
<dbReference type="IntAct" id="Q54JE1">
    <property type="interactions" value="1"/>
</dbReference>
<dbReference type="MINT" id="Q54JE1"/>
<dbReference type="STRING" id="44689.Q54JE1"/>
<dbReference type="GlyCosmos" id="Q54JE1">
    <property type="glycosylation" value="10 sites, No reported glycans"/>
</dbReference>
<dbReference type="GlyGen" id="Q54JE1">
    <property type="glycosylation" value="11 sites"/>
</dbReference>
<dbReference type="PaxDb" id="44689-DDB0233525"/>
<dbReference type="EnsemblProtists" id="EAL63396">
    <property type="protein sequence ID" value="EAL63396"/>
    <property type="gene ID" value="DDB_G0288103"/>
</dbReference>
<dbReference type="GeneID" id="8626464"/>
<dbReference type="KEGG" id="ddi:DDB_G0288103"/>
<dbReference type="dictyBase" id="DDB_G0288103">
    <property type="gene designation" value="sibB"/>
</dbReference>
<dbReference type="VEuPathDB" id="AmoebaDB:DDB_G0288103"/>
<dbReference type="HOGENOM" id="CLU_234725_0_0_1"/>
<dbReference type="InParanoid" id="Q54JE1"/>
<dbReference type="OMA" id="WACTEIT"/>
<dbReference type="PhylomeDB" id="Q54JE1"/>
<dbReference type="PRO" id="PR:Q54JE1"/>
<dbReference type="Proteomes" id="UP000002195">
    <property type="component" value="Chromosome 5"/>
</dbReference>
<dbReference type="GO" id="GO:0016020">
    <property type="term" value="C:membrane"/>
    <property type="evidence" value="ECO:0007669"/>
    <property type="project" value="UniProtKB-SubCell"/>
</dbReference>
<dbReference type="GO" id="GO:0007155">
    <property type="term" value="P:cell adhesion"/>
    <property type="evidence" value="ECO:0007669"/>
    <property type="project" value="UniProtKB-KW"/>
</dbReference>
<dbReference type="Gene3D" id="3.40.50.410">
    <property type="entry name" value="von Willebrand factor, type A domain"/>
    <property type="match status" value="1"/>
</dbReference>
<dbReference type="InterPro" id="IPR000742">
    <property type="entry name" value="EGF-like_dom"/>
</dbReference>
<dbReference type="InterPro" id="IPR056851">
    <property type="entry name" value="Ig_SibA-E"/>
</dbReference>
<dbReference type="InterPro" id="IPR056847">
    <property type="entry name" value="Ig_SibA-E_2nd"/>
</dbReference>
<dbReference type="InterPro" id="IPR056849">
    <property type="entry name" value="Ig_SibA-E_3rd"/>
</dbReference>
<dbReference type="InterPro" id="IPR052108">
    <property type="entry name" value="MEGF/SIB"/>
</dbReference>
<dbReference type="InterPro" id="IPR056844">
    <property type="entry name" value="SibA-E_N"/>
</dbReference>
<dbReference type="InterPro" id="IPR002035">
    <property type="entry name" value="VWF_A"/>
</dbReference>
<dbReference type="InterPro" id="IPR036465">
    <property type="entry name" value="vWFA_dom_sf"/>
</dbReference>
<dbReference type="PANTHER" id="PTHR24035">
    <property type="entry name" value="MULTIPLE EPIDERMAL GROWTH FACTOR-LIKE DOMAINS PROTEIN"/>
    <property type="match status" value="1"/>
</dbReference>
<dbReference type="PANTHER" id="PTHR24035:SF109">
    <property type="entry name" value="PROTEIN DRAPER"/>
    <property type="match status" value="1"/>
</dbReference>
<dbReference type="Pfam" id="PF24619">
    <property type="entry name" value="Ig_SibA"/>
    <property type="match status" value="1"/>
</dbReference>
<dbReference type="Pfam" id="PF24908">
    <property type="entry name" value="Ig_SIBA-E_2nd"/>
    <property type="match status" value="1"/>
</dbReference>
<dbReference type="Pfam" id="PF24910">
    <property type="entry name" value="Ig_SIBA-E_3rd"/>
    <property type="match status" value="1"/>
</dbReference>
<dbReference type="Pfam" id="PF24907">
    <property type="entry name" value="SIBA-E_N"/>
    <property type="match status" value="1"/>
</dbReference>
<dbReference type="Pfam" id="PF24909">
    <property type="entry name" value="vWA_SIBA-E"/>
    <property type="match status" value="1"/>
</dbReference>
<dbReference type="SMART" id="SM00327">
    <property type="entry name" value="VWA"/>
    <property type="match status" value="1"/>
</dbReference>
<dbReference type="SUPFAM" id="SSF53300">
    <property type="entry name" value="vWA-like"/>
    <property type="match status" value="1"/>
</dbReference>
<dbReference type="PROSITE" id="PS00022">
    <property type="entry name" value="EGF_1"/>
    <property type="match status" value="1"/>
</dbReference>
<dbReference type="PROSITE" id="PS01186">
    <property type="entry name" value="EGF_2"/>
    <property type="match status" value="1"/>
</dbReference>
<dbReference type="PROSITE" id="PS50026">
    <property type="entry name" value="EGF_3"/>
    <property type="match status" value="1"/>
</dbReference>
<dbReference type="PROSITE" id="PS50234">
    <property type="entry name" value="VWFA"/>
    <property type="match status" value="1"/>
</dbReference>
<organism>
    <name type="scientific">Dictyostelium discoideum</name>
    <name type="common">Social amoeba</name>
    <dbReference type="NCBI Taxonomy" id="44689"/>
    <lineage>
        <taxon>Eukaryota</taxon>
        <taxon>Amoebozoa</taxon>
        <taxon>Evosea</taxon>
        <taxon>Eumycetozoa</taxon>
        <taxon>Dictyostelia</taxon>
        <taxon>Dictyosteliales</taxon>
        <taxon>Dictyosteliaceae</taxon>
        <taxon>Dictyostelium</taxon>
    </lineage>
</organism>